<evidence type="ECO:0000250" key="1">
    <source>
        <dbReference type="UniProtKB" id="Q9Y2X7"/>
    </source>
</evidence>
<evidence type="ECO:0000250" key="2">
    <source>
        <dbReference type="UniProtKB" id="Q9Z272"/>
    </source>
</evidence>
<evidence type="ECO:0000255" key="3"/>
<evidence type="ECO:0000255" key="4">
    <source>
        <dbReference type="PROSITE-ProRule" id="PRU00288"/>
    </source>
</evidence>
<evidence type="ECO:0000256" key="5">
    <source>
        <dbReference type="SAM" id="MobiDB-lite"/>
    </source>
</evidence>
<evidence type="ECO:0000269" key="6">
    <source>
    </source>
</evidence>
<evidence type="ECO:0000269" key="7">
    <source>
    </source>
</evidence>
<evidence type="ECO:0000269" key="8">
    <source>
    </source>
</evidence>
<evidence type="ECO:0000269" key="9">
    <source>
    </source>
</evidence>
<evidence type="ECO:0000269" key="10">
    <source>
    </source>
</evidence>
<evidence type="ECO:0000269" key="11">
    <source>
    </source>
</evidence>
<evidence type="ECO:0000269" key="12">
    <source>
    </source>
</evidence>
<evidence type="ECO:0000269" key="13">
    <source>
    </source>
</evidence>
<evidence type="ECO:0000269" key="14">
    <source>
    </source>
</evidence>
<evidence type="ECO:0000269" key="15">
    <source>
    </source>
</evidence>
<evidence type="ECO:0000269" key="16">
    <source>
    </source>
</evidence>
<evidence type="ECO:0000269" key="17">
    <source>
    </source>
</evidence>
<evidence type="ECO:0000269" key="18">
    <source>
    </source>
</evidence>
<evidence type="ECO:0000269" key="19">
    <source>
    </source>
</evidence>
<evidence type="ECO:0000269" key="20">
    <source>
    </source>
</evidence>
<evidence type="ECO:0000269" key="21">
    <source>
    </source>
</evidence>
<evidence type="ECO:0000269" key="22">
    <source>
    </source>
</evidence>
<evidence type="ECO:0000269" key="23">
    <source>
    </source>
</evidence>
<evidence type="ECO:0000269" key="24">
    <source>
    </source>
</evidence>
<evidence type="ECO:0000269" key="25">
    <source>
    </source>
</evidence>
<evidence type="ECO:0007744" key="26">
    <source>
    </source>
</evidence>
<evidence type="ECO:0007744" key="27">
    <source>
    </source>
</evidence>
<evidence type="ECO:0007744" key="28">
    <source>
    </source>
</evidence>
<evidence type="ECO:0007744" key="29">
    <source>
    </source>
</evidence>
<evidence type="ECO:0007744" key="30">
    <source>
    </source>
</evidence>
<evidence type="ECO:0007829" key="31">
    <source>
        <dbReference type="PDB" id="6JMU"/>
    </source>
</evidence>
<accession>Q68FF6</accession>
<organism>
    <name type="scientific">Mus musculus</name>
    <name type="common">Mouse</name>
    <dbReference type="NCBI Taxonomy" id="10090"/>
    <lineage>
        <taxon>Eukaryota</taxon>
        <taxon>Metazoa</taxon>
        <taxon>Chordata</taxon>
        <taxon>Craniata</taxon>
        <taxon>Vertebrata</taxon>
        <taxon>Euteleostomi</taxon>
        <taxon>Mammalia</taxon>
        <taxon>Eutheria</taxon>
        <taxon>Euarchontoglires</taxon>
        <taxon>Glires</taxon>
        <taxon>Rodentia</taxon>
        <taxon>Myomorpha</taxon>
        <taxon>Muroidea</taxon>
        <taxon>Muridae</taxon>
        <taxon>Murinae</taxon>
        <taxon>Mus</taxon>
        <taxon>Mus</taxon>
    </lineage>
</organism>
<feature type="chain" id="PRO_0000074201" description="ARF GTPase-activating protein GIT1">
    <location>
        <begin position="1"/>
        <end position="770"/>
    </location>
</feature>
<feature type="domain" description="Arf-GAP" evidence="4">
    <location>
        <begin position="1"/>
        <end position="124"/>
    </location>
</feature>
<feature type="repeat" description="ANK 1">
    <location>
        <begin position="132"/>
        <end position="161"/>
    </location>
</feature>
<feature type="repeat" description="ANK 2">
    <location>
        <begin position="166"/>
        <end position="195"/>
    </location>
</feature>
<feature type="repeat" description="ANK 3">
    <location>
        <begin position="199"/>
        <end position="228"/>
    </location>
</feature>
<feature type="zinc finger region" description="C4-type" evidence="4">
    <location>
        <begin position="11"/>
        <end position="34"/>
    </location>
</feature>
<feature type="region of interest" description="Interaction with gamma-tubulin and localization to the centrosome" evidence="1">
    <location>
        <begin position="1"/>
        <end position="124"/>
    </location>
</feature>
<feature type="region of interest" description="Interaction with PCLO" evidence="2">
    <location>
        <begin position="245"/>
        <end position="374"/>
    </location>
</feature>
<feature type="region of interest" description="Interaction with PTK2/FAK1" evidence="2">
    <location>
        <begin position="253"/>
        <end position="424"/>
    </location>
</feature>
<feature type="region of interest" description="Interaction with ARHGEF7" evidence="2">
    <location>
        <begin position="254"/>
        <end position="376"/>
    </location>
</feature>
<feature type="region of interest" description="Disordered" evidence="5">
    <location>
        <begin position="363"/>
        <end position="425"/>
    </location>
</feature>
<feature type="region of interest" description="Interaction with NCK2 and GRIN3A" evidence="2">
    <location>
        <begin position="375"/>
        <end position="596"/>
    </location>
</feature>
<feature type="region of interest" description="Required for localization at synapses" evidence="1">
    <location>
        <begin position="375"/>
        <end position="596"/>
    </location>
</feature>
<feature type="region of interest" description="Interaction with MAPK1" evidence="9">
    <location>
        <begin position="420"/>
        <end position="475"/>
    </location>
</feature>
<feature type="region of interest" description="Interaction with IKBKG" evidence="1">
    <location>
        <begin position="429"/>
        <end position="629"/>
    </location>
</feature>
<feature type="region of interest" description="Disordered" evidence="5">
    <location>
        <begin position="578"/>
        <end position="615"/>
    </location>
</feature>
<feature type="region of interest" description="Interaction with PXN and TGFB1I1" evidence="2">
    <location>
        <begin position="646"/>
        <end position="770"/>
    </location>
</feature>
<feature type="coiled-coil region" evidence="3">
    <location>
        <begin position="449"/>
        <end position="483"/>
    </location>
</feature>
<feature type="compositionally biased region" description="Polar residues" evidence="5">
    <location>
        <begin position="366"/>
        <end position="383"/>
    </location>
</feature>
<feature type="compositionally biased region" description="Acidic residues" evidence="5">
    <location>
        <begin position="394"/>
        <end position="403"/>
    </location>
</feature>
<feature type="compositionally biased region" description="Polar residues" evidence="5">
    <location>
        <begin position="578"/>
        <end position="588"/>
    </location>
</feature>
<feature type="modified residue" description="Phosphotyrosine" evidence="28">
    <location>
        <position position="224"/>
    </location>
</feature>
<feature type="modified residue" description="Phosphoserine" evidence="30">
    <location>
        <position position="368"/>
    </location>
</feature>
<feature type="modified residue" description="Phosphoserine" evidence="30">
    <location>
        <position position="371"/>
    </location>
</feature>
<feature type="modified residue" description="Phosphothreonine" evidence="1">
    <location>
        <position position="373"/>
    </location>
</feature>
<feature type="modified residue" description="Phosphoserine" evidence="1">
    <location>
        <position position="379"/>
    </location>
</feature>
<feature type="modified residue" description="Phosphoserine" evidence="1">
    <location>
        <position position="384"/>
    </location>
</feature>
<feature type="modified residue" description="Phosphotyrosine" evidence="1">
    <location>
        <position position="392"/>
    </location>
</feature>
<feature type="modified residue" description="Phosphoserine" evidence="30">
    <location>
        <position position="394"/>
    </location>
</feature>
<feature type="modified residue" description="Phosphoserine" evidence="30">
    <location>
        <position position="397"/>
    </location>
</feature>
<feature type="modified residue" description="Phosphothreonine" evidence="30">
    <location>
        <position position="401"/>
    </location>
</feature>
<feature type="modified residue" description="Phosphoserine" evidence="30">
    <location>
        <position position="419"/>
    </location>
</feature>
<feature type="modified residue" description="Phosphoserine" evidence="30">
    <location>
        <position position="422"/>
    </location>
</feature>
<feature type="modified residue" description="Phosphoserine" evidence="30">
    <location>
        <position position="426"/>
    </location>
</feature>
<feature type="modified residue" description="Phosphoserine" evidence="1">
    <location>
        <position position="507"/>
    </location>
</feature>
<feature type="modified residue" description="Phosphoserine" evidence="30">
    <location>
        <position position="545"/>
    </location>
</feature>
<feature type="modified residue" description="Phosphothreonine" evidence="30">
    <location>
        <position position="546"/>
    </location>
</feature>
<feature type="modified residue" description="Phosphotyrosine" evidence="29">
    <location>
        <position position="554"/>
    </location>
</feature>
<feature type="modified residue" description="Phosphotyrosine" evidence="26">
    <location>
        <position position="563"/>
    </location>
</feature>
<feature type="modified residue" description="Phosphoserine" evidence="30">
    <location>
        <position position="570"/>
    </location>
</feature>
<feature type="modified residue" description="Phosphoserine" evidence="2">
    <location>
        <position position="580"/>
    </location>
</feature>
<feature type="modified residue" description="Phosphoserine" evidence="27 30">
    <location>
        <position position="601"/>
    </location>
</feature>
<feature type="modified residue" description="Phosphoserine" evidence="30">
    <location>
        <position position="605"/>
    </location>
</feature>
<feature type="modified residue" description="Phosphothreonine" evidence="30">
    <location>
        <position position="610"/>
    </location>
</feature>
<feature type="modified residue" description="Phosphoserine" evidence="2">
    <location>
        <position position="639"/>
    </location>
</feature>
<feature type="mutagenesis site" description="Loss of interaction with MAPK1." evidence="9">
    <location>
        <begin position="420"/>
        <end position="475"/>
    </location>
</feature>
<feature type="helix" evidence="31">
    <location>
        <begin position="651"/>
        <end position="673"/>
    </location>
</feature>
<feature type="helix" evidence="31">
    <location>
        <begin position="677"/>
        <end position="679"/>
    </location>
</feature>
<feature type="helix" evidence="31">
    <location>
        <begin position="680"/>
        <end position="695"/>
    </location>
</feature>
<feature type="strand" evidence="31">
    <location>
        <begin position="700"/>
        <end position="704"/>
    </location>
</feature>
<feature type="helix" evidence="31">
    <location>
        <begin position="705"/>
        <end position="726"/>
    </location>
</feature>
<feature type="helix" evidence="31">
    <location>
        <begin position="739"/>
        <end position="767"/>
    </location>
</feature>
<dbReference type="EMBL" id="AL607072">
    <property type="status" value="NOT_ANNOTATED_CDS"/>
    <property type="molecule type" value="Genomic_DNA"/>
</dbReference>
<dbReference type="EMBL" id="BC079870">
    <property type="protein sequence ID" value="AAH79870.1"/>
    <property type="molecule type" value="mRNA"/>
</dbReference>
<dbReference type="CCDS" id="CCDS25080.1"/>
<dbReference type="RefSeq" id="NP_001004144.1">
    <property type="nucleotide sequence ID" value="NM_001004144.1"/>
</dbReference>
<dbReference type="PDB" id="6JMU">
    <property type="method" value="X-ray"/>
    <property type="resolution" value="2.00 A"/>
    <property type="chains" value="A/B=640-770"/>
</dbReference>
<dbReference type="PDBsum" id="6JMU"/>
<dbReference type="SMR" id="Q68FF6"/>
<dbReference type="BioGRID" id="229822">
    <property type="interactions" value="35"/>
</dbReference>
<dbReference type="CORUM" id="Q68FF6"/>
<dbReference type="FunCoup" id="Q68FF6">
    <property type="interactions" value="1799"/>
</dbReference>
<dbReference type="IntAct" id="Q68FF6">
    <property type="interactions" value="34"/>
</dbReference>
<dbReference type="MINT" id="Q68FF6"/>
<dbReference type="STRING" id="10090.ENSMUSP00000037210"/>
<dbReference type="GlyGen" id="Q68FF6">
    <property type="glycosylation" value="4 sites, 1 N-linked glycan (1 site), 1 O-linked glycan (2 sites)"/>
</dbReference>
<dbReference type="iPTMnet" id="Q68FF6"/>
<dbReference type="PhosphoSitePlus" id="Q68FF6"/>
<dbReference type="SwissPalm" id="Q68FF6"/>
<dbReference type="jPOST" id="Q68FF6"/>
<dbReference type="PaxDb" id="10090-ENSMUSP00000037210"/>
<dbReference type="PeptideAtlas" id="Q68FF6"/>
<dbReference type="ProteomicsDB" id="268825"/>
<dbReference type="Pumba" id="Q68FF6"/>
<dbReference type="ABCD" id="Q68FF6">
    <property type="antibodies" value="1 sequenced antibody"/>
</dbReference>
<dbReference type="Antibodypedia" id="1365">
    <property type="antibodies" value="487 antibodies from 37 providers"/>
</dbReference>
<dbReference type="DNASU" id="216963"/>
<dbReference type="Ensembl" id="ENSMUST00000037285.10">
    <property type="protein sequence ID" value="ENSMUSP00000037210.4"/>
    <property type="gene ID" value="ENSMUSG00000011877.14"/>
</dbReference>
<dbReference type="GeneID" id="216963"/>
<dbReference type="UCSC" id="uc007kgy.1">
    <property type="organism name" value="mouse"/>
</dbReference>
<dbReference type="AGR" id="MGI:1927140"/>
<dbReference type="CTD" id="28964"/>
<dbReference type="MGI" id="MGI:1927140">
    <property type="gene designation" value="Git1"/>
</dbReference>
<dbReference type="VEuPathDB" id="HostDB:ENSMUSG00000011877"/>
<dbReference type="eggNOG" id="KOG0818">
    <property type="taxonomic scope" value="Eukaryota"/>
</dbReference>
<dbReference type="GeneTree" id="ENSGT00940000159604"/>
<dbReference type="InParanoid" id="Q68FF6"/>
<dbReference type="OMA" id="IDHKNGH"/>
<dbReference type="OrthoDB" id="5588096at2759"/>
<dbReference type="PhylomeDB" id="Q68FF6"/>
<dbReference type="TreeFam" id="TF317762"/>
<dbReference type="Reactome" id="R-MMU-3928664">
    <property type="pathway name" value="Ephrin signaling"/>
</dbReference>
<dbReference type="Reactome" id="R-MMU-9013149">
    <property type="pathway name" value="RAC1 GTPase cycle"/>
</dbReference>
<dbReference type="Reactome" id="R-MMU-9013404">
    <property type="pathway name" value="RAC2 GTPase cycle"/>
</dbReference>
<dbReference type="Reactome" id="R-MMU-9013406">
    <property type="pathway name" value="RHOQ GTPase cycle"/>
</dbReference>
<dbReference type="Reactome" id="R-MMU-9013420">
    <property type="pathway name" value="RHOU GTPase cycle"/>
</dbReference>
<dbReference type="Reactome" id="R-MMU-9013423">
    <property type="pathway name" value="RAC3 GTPase cycle"/>
</dbReference>
<dbReference type="Reactome" id="R-MMU-9013424">
    <property type="pathway name" value="RHOV GTPase cycle"/>
</dbReference>
<dbReference type="BioGRID-ORCS" id="216963">
    <property type="hits" value="2 hits in 78 CRISPR screens"/>
</dbReference>
<dbReference type="CD-CODE" id="CE726F99">
    <property type="entry name" value="Postsynaptic density"/>
</dbReference>
<dbReference type="CD-CODE" id="D4281DD4">
    <property type="entry name" value="Synthetic Condensate 000311"/>
</dbReference>
<dbReference type="ChiTaRS" id="Git1">
    <property type="organism name" value="mouse"/>
</dbReference>
<dbReference type="PRO" id="PR:Q68FF6"/>
<dbReference type="Proteomes" id="UP000000589">
    <property type="component" value="Chromosome 11"/>
</dbReference>
<dbReference type="RNAct" id="Q68FF6">
    <property type="molecule type" value="protein"/>
</dbReference>
<dbReference type="Bgee" id="ENSMUSG00000011877">
    <property type="expression patterns" value="Expressed in superior frontal gyrus and 245 other cell types or tissues"/>
</dbReference>
<dbReference type="ExpressionAtlas" id="Q68FF6">
    <property type="expression patterns" value="baseline and differential"/>
</dbReference>
<dbReference type="GO" id="GO:0044305">
    <property type="term" value="C:calyx of Held"/>
    <property type="evidence" value="ECO:0000314"/>
    <property type="project" value="SynGO"/>
</dbReference>
<dbReference type="GO" id="GO:0005813">
    <property type="term" value="C:centrosome"/>
    <property type="evidence" value="ECO:0000250"/>
    <property type="project" value="UniProtKB"/>
</dbReference>
<dbReference type="GO" id="GO:0005829">
    <property type="term" value="C:cytosol"/>
    <property type="evidence" value="ECO:0000304"/>
    <property type="project" value="Reactome"/>
</dbReference>
<dbReference type="GO" id="GO:0030425">
    <property type="term" value="C:dendrite"/>
    <property type="evidence" value="ECO:0007669"/>
    <property type="project" value="Ensembl"/>
</dbReference>
<dbReference type="GO" id="GO:0005768">
    <property type="term" value="C:endosome"/>
    <property type="evidence" value="ECO:0007669"/>
    <property type="project" value="Ensembl"/>
</dbReference>
<dbReference type="GO" id="GO:0060076">
    <property type="term" value="C:excitatory synapse"/>
    <property type="evidence" value="ECO:0007669"/>
    <property type="project" value="Ensembl"/>
</dbReference>
<dbReference type="GO" id="GO:0005925">
    <property type="term" value="C:focal adhesion"/>
    <property type="evidence" value="ECO:0007669"/>
    <property type="project" value="UniProtKB-SubCell"/>
</dbReference>
<dbReference type="GO" id="GO:0098982">
    <property type="term" value="C:GABA-ergic synapse"/>
    <property type="evidence" value="ECO:0007669"/>
    <property type="project" value="Ensembl"/>
</dbReference>
<dbReference type="GO" id="GO:0098978">
    <property type="term" value="C:glutamatergic synapse"/>
    <property type="evidence" value="ECO:0007669"/>
    <property type="project" value="Ensembl"/>
</dbReference>
<dbReference type="GO" id="GO:0030426">
    <property type="term" value="C:growth cone"/>
    <property type="evidence" value="ECO:0007669"/>
    <property type="project" value="Ensembl"/>
</dbReference>
<dbReference type="GO" id="GO:0060077">
    <property type="term" value="C:inhibitory synapse"/>
    <property type="evidence" value="ECO:0007669"/>
    <property type="project" value="Ensembl"/>
</dbReference>
<dbReference type="GO" id="GO:0030027">
    <property type="term" value="C:lamellipodium"/>
    <property type="evidence" value="ECO:0007669"/>
    <property type="project" value="UniProtKB-SubCell"/>
</dbReference>
<dbReference type="GO" id="GO:0005739">
    <property type="term" value="C:mitochondrion"/>
    <property type="evidence" value="ECO:0007669"/>
    <property type="project" value="Ensembl"/>
</dbReference>
<dbReference type="GO" id="GO:0097431">
    <property type="term" value="C:mitotic spindle pole"/>
    <property type="evidence" value="ECO:0000250"/>
    <property type="project" value="UniProtKB"/>
</dbReference>
<dbReference type="GO" id="GO:0098794">
    <property type="term" value="C:postsynapse"/>
    <property type="evidence" value="ECO:0000314"/>
    <property type="project" value="UniProtKB"/>
</dbReference>
<dbReference type="GO" id="GO:0014069">
    <property type="term" value="C:postsynaptic density"/>
    <property type="evidence" value="ECO:0007669"/>
    <property type="project" value="UniProtKB-SubCell"/>
</dbReference>
<dbReference type="GO" id="GO:0098793">
    <property type="term" value="C:presynapse"/>
    <property type="evidence" value="ECO:0000314"/>
    <property type="project" value="SynGO"/>
</dbReference>
<dbReference type="GO" id="GO:0043015">
    <property type="term" value="F:gamma-tubulin binding"/>
    <property type="evidence" value="ECO:0000250"/>
    <property type="project" value="UniProtKB"/>
</dbReference>
<dbReference type="GO" id="GO:0005096">
    <property type="term" value="F:GTPase activator activity"/>
    <property type="evidence" value="ECO:0007669"/>
    <property type="project" value="UniProtKB-KW"/>
</dbReference>
<dbReference type="GO" id="GO:0042802">
    <property type="term" value="F:identical protein binding"/>
    <property type="evidence" value="ECO:0007669"/>
    <property type="project" value="Ensembl"/>
</dbReference>
<dbReference type="GO" id="GO:0019903">
    <property type="term" value="F:protein phosphatase binding"/>
    <property type="evidence" value="ECO:0007669"/>
    <property type="project" value="Ensembl"/>
</dbReference>
<dbReference type="GO" id="GO:1990782">
    <property type="term" value="F:protein tyrosine kinase binding"/>
    <property type="evidence" value="ECO:0007669"/>
    <property type="project" value="Ensembl"/>
</dbReference>
<dbReference type="GO" id="GO:0044877">
    <property type="term" value="F:protein-containing complex binding"/>
    <property type="evidence" value="ECO:0000353"/>
    <property type="project" value="MGI"/>
</dbReference>
<dbReference type="GO" id="GO:0097110">
    <property type="term" value="F:scaffold protein binding"/>
    <property type="evidence" value="ECO:0007669"/>
    <property type="project" value="Ensembl"/>
</dbReference>
<dbReference type="GO" id="GO:0031267">
    <property type="term" value="F:small GTPase binding"/>
    <property type="evidence" value="ECO:0007669"/>
    <property type="project" value="Ensembl"/>
</dbReference>
<dbReference type="GO" id="GO:0098879">
    <property type="term" value="F:structural constituent of postsynaptic specialization"/>
    <property type="evidence" value="ECO:0007669"/>
    <property type="project" value="Ensembl"/>
</dbReference>
<dbReference type="GO" id="GO:0008270">
    <property type="term" value="F:zinc ion binding"/>
    <property type="evidence" value="ECO:0007669"/>
    <property type="project" value="UniProtKB-KW"/>
</dbReference>
<dbReference type="GO" id="GO:0007420">
    <property type="term" value="P:brain development"/>
    <property type="evidence" value="ECO:0000315"/>
    <property type="project" value="UniProtKB"/>
</dbReference>
<dbReference type="GO" id="GO:0045454">
    <property type="term" value="P:cell redox homeostasis"/>
    <property type="evidence" value="ECO:0000315"/>
    <property type="project" value="UniProtKB"/>
</dbReference>
<dbReference type="GO" id="GO:0071364">
    <property type="term" value="P:cellular response to epidermal growth factor stimulus"/>
    <property type="evidence" value="ECO:0007669"/>
    <property type="project" value="Ensembl"/>
</dbReference>
<dbReference type="GO" id="GO:0071222">
    <property type="term" value="P:cellular response to lipopolysaccharide"/>
    <property type="evidence" value="ECO:0000315"/>
    <property type="project" value="UniProtKB"/>
</dbReference>
<dbReference type="GO" id="GO:0060996">
    <property type="term" value="P:dendritic spine development"/>
    <property type="evidence" value="ECO:0000266"/>
    <property type="project" value="MGI"/>
</dbReference>
<dbReference type="GO" id="GO:0048013">
    <property type="term" value="P:ephrin receptor signaling pathway"/>
    <property type="evidence" value="ECO:0000314"/>
    <property type="project" value="MGI"/>
</dbReference>
<dbReference type="GO" id="GO:0001771">
    <property type="term" value="P:immunological synapse formation"/>
    <property type="evidence" value="ECO:0000266"/>
    <property type="project" value="MGI"/>
</dbReference>
<dbReference type="GO" id="GO:0001957">
    <property type="term" value="P:intramembranous ossification"/>
    <property type="evidence" value="ECO:0000315"/>
    <property type="project" value="UniProtKB"/>
</dbReference>
<dbReference type="GO" id="GO:0007626">
    <property type="term" value="P:locomotory behavior"/>
    <property type="evidence" value="ECO:0000315"/>
    <property type="project" value="UniProtKB"/>
</dbReference>
<dbReference type="GO" id="GO:0061743">
    <property type="term" value="P:motor learning"/>
    <property type="evidence" value="ECO:0000315"/>
    <property type="project" value="UniProtKB"/>
</dbReference>
<dbReference type="GO" id="GO:0032013">
    <property type="term" value="P:negative regulation of ARF protein signal transduction"/>
    <property type="evidence" value="ECO:0007669"/>
    <property type="project" value="Ensembl"/>
</dbReference>
<dbReference type="GO" id="GO:0045820">
    <property type="term" value="P:negative regulation of glycolytic process"/>
    <property type="evidence" value="ECO:0000315"/>
    <property type="project" value="UniProtKB"/>
</dbReference>
<dbReference type="GO" id="GO:0106015">
    <property type="term" value="P:negative regulation of inflammatory response to wounding"/>
    <property type="evidence" value="ECO:0000315"/>
    <property type="project" value="UniProtKB"/>
</dbReference>
<dbReference type="GO" id="GO:0032691">
    <property type="term" value="P:negative regulation of interleukin-1 beta production"/>
    <property type="evidence" value="ECO:0000315"/>
    <property type="project" value="UniProtKB"/>
</dbReference>
<dbReference type="GO" id="GO:0048666">
    <property type="term" value="P:neuron development"/>
    <property type="evidence" value="ECO:0000315"/>
    <property type="project" value="UniProtKB"/>
</dbReference>
<dbReference type="GO" id="GO:0099645">
    <property type="term" value="P:neurotransmitter receptor localization to postsynaptic specialization membrane"/>
    <property type="evidence" value="ECO:0007669"/>
    <property type="project" value="Ensembl"/>
</dbReference>
<dbReference type="GO" id="GO:0090063">
    <property type="term" value="P:positive regulation of microtubule nucleation"/>
    <property type="evidence" value="ECO:0000250"/>
    <property type="project" value="UniProtKB"/>
</dbReference>
<dbReference type="GO" id="GO:2000646">
    <property type="term" value="P:positive regulation of receptor catabolic process"/>
    <property type="evidence" value="ECO:0007669"/>
    <property type="project" value="Ensembl"/>
</dbReference>
<dbReference type="GO" id="GO:0099171">
    <property type="term" value="P:presynaptic modulation of chemical synaptic transmission"/>
    <property type="evidence" value="ECO:0000314"/>
    <property type="project" value="SynGO"/>
</dbReference>
<dbReference type="GO" id="GO:0032465">
    <property type="term" value="P:regulation of cytokinesis"/>
    <property type="evidence" value="ECO:0007669"/>
    <property type="project" value="Ensembl"/>
</dbReference>
<dbReference type="GO" id="GO:0008277">
    <property type="term" value="P:regulation of G protein-coupled receptor signaling pathway"/>
    <property type="evidence" value="ECO:0007669"/>
    <property type="project" value="Ensembl"/>
</dbReference>
<dbReference type="GO" id="GO:2000300">
    <property type="term" value="P:regulation of synaptic vesicle exocytosis"/>
    <property type="evidence" value="ECO:0000314"/>
    <property type="project" value="SynGO"/>
</dbReference>
<dbReference type="CDD" id="cd08846">
    <property type="entry name" value="ArfGap_GIT1"/>
    <property type="match status" value="1"/>
</dbReference>
<dbReference type="FunFam" id="1.25.40.20:FF:000013">
    <property type="entry name" value="ARF GTPase-activating protein GIT1 isoform 1"/>
    <property type="match status" value="1"/>
</dbReference>
<dbReference type="FunFam" id="1.10.220.150:FF:000003">
    <property type="entry name" value="ARF GTPase-activating protein GIT2 isoform 1"/>
    <property type="match status" value="1"/>
</dbReference>
<dbReference type="FunFam" id="1.20.120.330:FF:000002">
    <property type="entry name" value="ARF GTPase-activating protein GIT2 isoform 1"/>
    <property type="match status" value="1"/>
</dbReference>
<dbReference type="FunFam" id="1.20.5.170:FF:000015">
    <property type="entry name" value="ARF GTPase-activating protein GIT2 isoform 1"/>
    <property type="match status" value="1"/>
</dbReference>
<dbReference type="Gene3D" id="1.20.5.170">
    <property type="match status" value="1"/>
</dbReference>
<dbReference type="Gene3D" id="1.25.40.20">
    <property type="entry name" value="Ankyrin repeat-containing domain"/>
    <property type="match status" value="1"/>
</dbReference>
<dbReference type="Gene3D" id="1.10.220.150">
    <property type="entry name" value="Arf GTPase activating protein"/>
    <property type="match status" value="1"/>
</dbReference>
<dbReference type="Gene3D" id="1.20.120.330">
    <property type="entry name" value="Nucleotidyltransferases domain 2"/>
    <property type="match status" value="1"/>
</dbReference>
<dbReference type="InterPro" id="IPR002110">
    <property type="entry name" value="Ankyrin_rpt"/>
</dbReference>
<dbReference type="InterPro" id="IPR036770">
    <property type="entry name" value="Ankyrin_rpt-contain_sf"/>
</dbReference>
<dbReference type="InterPro" id="IPR037278">
    <property type="entry name" value="ARFGAP/RecO"/>
</dbReference>
<dbReference type="InterPro" id="IPR001164">
    <property type="entry name" value="ArfGAP_dom"/>
</dbReference>
<dbReference type="InterPro" id="IPR038508">
    <property type="entry name" value="ArfGAP_dom_sf"/>
</dbReference>
<dbReference type="InterPro" id="IPR047161">
    <property type="entry name" value="GIT-like"/>
</dbReference>
<dbReference type="InterPro" id="IPR032352">
    <property type="entry name" value="GIT1/2_CC"/>
</dbReference>
<dbReference type="InterPro" id="IPR022018">
    <property type="entry name" value="GIT1_C"/>
</dbReference>
<dbReference type="InterPro" id="IPR013724">
    <property type="entry name" value="GIT_SHD"/>
</dbReference>
<dbReference type="PANTHER" id="PTHR46097:SF1">
    <property type="entry name" value="ARF GTPASE-ACTIVATING PROTEIN GIT1"/>
    <property type="match status" value="1"/>
</dbReference>
<dbReference type="PANTHER" id="PTHR46097">
    <property type="entry name" value="G PROTEIN-COUPLED RECEPTOR KINASE INTERACTING ARFGAP"/>
    <property type="match status" value="1"/>
</dbReference>
<dbReference type="Pfam" id="PF12796">
    <property type="entry name" value="Ank_2"/>
    <property type="match status" value="1"/>
</dbReference>
<dbReference type="Pfam" id="PF01412">
    <property type="entry name" value="ArfGap"/>
    <property type="match status" value="1"/>
</dbReference>
<dbReference type="Pfam" id="PF12205">
    <property type="entry name" value="GIT1_C"/>
    <property type="match status" value="1"/>
</dbReference>
<dbReference type="Pfam" id="PF16559">
    <property type="entry name" value="GIT_CC"/>
    <property type="match status" value="1"/>
</dbReference>
<dbReference type="Pfam" id="PF08518">
    <property type="entry name" value="GIT_SHD"/>
    <property type="match status" value="2"/>
</dbReference>
<dbReference type="PRINTS" id="PR00405">
    <property type="entry name" value="REVINTRACTNG"/>
</dbReference>
<dbReference type="SMART" id="SM00248">
    <property type="entry name" value="ANK"/>
    <property type="match status" value="3"/>
</dbReference>
<dbReference type="SMART" id="SM00105">
    <property type="entry name" value="ArfGap"/>
    <property type="match status" value="1"/>
</dbReference>
<dbReference type="SMART" id="SM00555">
    <property type="entry name" value="GIT"/>
    <property type="match status" value="2"/>
</dbReference>
<dbReference type="SUPFAM" id="SSF48403">
    <property type="entry name" value="Ankyrin repeat"/>
    <property type="match status" value="1"/>
</dbReference>
<dbReference type="SUPFAM" id="SSF57863">
    <property type="entry name" value="ArfGap/RecO-like zinc finger"/>
    <property type="match status" value="1"/>
</dbReference>
<dbReference type="PROSITE" id="PS50297">
    <property type="entry name" value="ANK_REP_REGION"/>
    <property type="match status" value="1"/>
</dbReference>
<dbReference type="PROSITE" id="PS50088">
    <property type="entry name" value="ANK_REPEAT"/>
    <property type="match status" value="1"/>
</dbReference>
<dbReference type="PROSITE" id="PS50115">
    <property type="entry name" value="ARFGAP"/>
    <property type="match status" value="1"/>
</dbReference>
<keyword id="KW-0002">3D-structure</keyword>
<keyword id="KW-0040">ANK repeat</keyword>
<keyword id="KW-0965">Cell junction</keyword>
<keyword id="KW-0966">Cell projection</keyword>
<keyword id="KW-0175">Coiled coil</keyword>
<keyword id="KW-0963">Cytoplasm</keyword>
<keyword id="KW-0206">Cytoskeleton</keyword>
<keyword id="KW-0343">GTPase activation</keyword>
<keyword id="KW-0479">Metal-binding</keyword>
<keyword id="KW-0597">Phosphoprotein</keyword>
<keyword id="KW-1185">Reference proteome</keyword>
<keyword id="KW-0677">Repeat</keyword>
<keyword id="KW-0770">Synapse</keyword>
<keyword id="KW-0862">Zinc</keyword>
<keyword id="KW-0863">Zinc-finger</keyword>
<reference key="1">
    <citation type="journal article" date="2009" name="PLoS Biol.">
        <title>Lineage-specific biology revealed by a finished genome assembly of the mouse.</title>
        <authorList>
            <person name="Church D.M."/>
            <person name="Goodstadt L."/>
            <person name="Hillier L.W."/>
            <person name="Zody M.C."/>
            <person name="Goldstein S."/>
            <person name="She X."/>
            <person name="Bult C.J."/>
            <person name="Agarwala R."/>
            <person name="Cherry J.L."/>
            <person name="DiCuccio M."/>
            <person name="Hlavina W."/>
            <person name="Kapustin Y."/>
            <person name="Meric P."/>
            <person name="Maglott D."/>
            <person name="Birtle Z."/>
            <person name="Marques A.C."/>
            <person name="Graves T."/>
            <person name="Zhou S."/>
            <person name="Teague B."/>
            <person name="Potamousis K."/>
            <person name="Churas C."/>
            <person name="Place M."/>
            <person name="Herschleb J."/>
            <person name="Runnheim R."/>
            <person name="Forrest D."/>
            <person name="Amos-Landgraf J."/>
            <person name="Schwartz D.C."/>
            <person name="Cheng Z."/>
            <person name="Lindblad-Toh K."/>
            <person name="Eichler E.E."/>
            <person name="Ponting C.P."/>
        </authorList>
    </citation>
    <scope>NUCLEOTIDE SEQUENCE [LARGE SCALE GENOMIC DNA]</scope>
    <source>
        <strain>C57BL/6J</strain>
    </source>
</reference>
<reference key="2">
    <citation type="journal article" date="2004" name="Genome Res.">
        <title>The status, quality, and expansion of the NIH full-length cDNA project: the Mammalian Gene Collection (MGC).</title>
        <authorList>
            <consortium name="The MGC Project Team"/>
        </authorList>
    </citation>
    <scope>NUCLEOTIDE SEQUENCE [LARGE SCALE MRNA]</scope>
    <source>
        <strain>C57BL/6J</strain>
        <tissue>Brain</tissue>
    </source>
</reference>
<reference key="3">
    <citation type="journal article" date="2002" name="J. Biochem.">
        <title>Hic-5 interacts with GIT1 with a different binding mode from paxillin.</title>
        <authorList>
            <person name="Nishiya N."/>
            <person name="Shirai T."/>
            <person name="Suzuki W."/>
            <person name="Nose K."/>
        </authorList>
    </citation>
    <scope>INTERACTION WITH TGFB1I1</scope>
</reference>
<reference key="4">
    <citation type="journal article" date="2003" name="J. Cell Biol.">
        <title>Synapse formation is regulated by the signaling adaptor GIT1.</title>
        <authorList>
            <person name="Zhang H."/>
            <person name="Webb D.J."/>
            <person name="Asmussen H."/>
            <person name="Horwitz A.F."/>
        </authorList>
    </citation>
    <scope>FUNCTION</scope>
</reference>
<reference key="5">
    <citation type="journal article" date="2004" name="Curr. Biol.">
        <title>Mammalian Scribble forms a tight complex with the betaPIX exchange factor.</title>
        <authorList>
            <person name="Audebert S."/>
            <person name="Navarro C."/>
            <person name="Nourry C."/>
            <person name="Chasserot-Golaz S."/>
            <person name="Lecine P."/>
            <person name="Bellaiche Y."/>
            <person name="Dupont J.-L."/>
            <person name="Premont R.T."/>
            <person name="Sempere C."/>
            <person name="Strub J.-M."/>
            <person name="Van Dorsselaer A."/>
            <person name="Vitale N."/>
            <person name="Borg J.-P."/>
        </authorList>
    </citation>
    <scope>INTERACTION WITH SCRIB</scope>
    <scope>TISSUE SPECIFICITY</scope>
</reference>
<reference key="6">
    <citation type="journal article" date="2005" name="J. Biol. Chem.">
        <title>GIT1 is a scaffold for ERK1/2 activation in focal adhesions.</title>
        <authorList>
            <person name="Yin G."/>
            <person name="Zheng Q."/>
            <person name="Yan C."/>
            <person name="Berk B.C."/>
        </authorList>
    </citation>
    <scope>INTERACTION WITH MAPK1 AND MAPK3</scope>
    <scope>MUTAGENESIS OF 420-MET--ALA-475</scope>
    <scope>SUBCELLULAR LOCATION</scope>
</reference>
<reference key="7">
    <citation type="journal article" date="2005" name="Nat. Biotechnol.">
        <title>Immunoaffinity profiling of tyrosine phosphorylation in cancer cells.</title>
        <authorList>
            <person name="Rush J."/>
            <person name="Moritz A."/>
            <person name="Lee K.A."/>
            <person name="Guo A."/>
            <person name="Goss V.L."/>
            <person name="Spek E.J."/>
            <person name="Zhang H."/>
            <person name="Zha X.-M."/>
            <person name="Polakiewicz R.D."/>
            <person name="Comb M.J."/>
        </authorList>
    </citation>
    <scope>PHOSPHORYLATION [LARGE SCALE ANALYSIS] AT TYR-563</scope>
    <scope>IDENTIFICATION BY MASS SPECTROMETRY [LARGE SCALE ANALYSIS]</scope>
</reference>
<reference key="8">
    <citation type="journal article" date="2006" name="Mol. Cell. Proteomics">
        <title>Comprehensive identification of phosphorylation sites in postsynaptic density preparations.</title>
        <authorList>
            <person name="Trinidad J.C."/>
            <person name="Specht C.G."/>
            <person name="Thalhammer A."/>
            <person name="Schoepfer R."/>
            <person name="Burlingame A.L."/>
        </authorList>
    </citation>
    <scope>IDENTIFICATION BY MASS SPECTROMETRY [LARGE SCALE ANALYSIS]</scope>
    <source>
        <tissue>Brain</tissue>
    </source>
</reference>
<reference key="9">
    <citation type="journal article" date="2006" name="Mol. Cell. Proteomics">
        <title>Transgenic mouse proteomics identifies new 14-3-3-associated proteins involved in cytoskeletal rearrangements and cell signaling.</title>
        <authorList>
            <person name="Angrand P.O."/>
            <person name="Segura I."/>
            <person name="Voelkel P."/>
            <person name="Ghidelli S."/>
            <person name="Terry R."/>
            <person name="Brajenovic M."/>
            <person name="Vintersten K."/>
            <person name="Klein R."/>
            <person name="Superti-Furga G."/>
            <person name="Drewes G."/>
            <person name="Kuster B."/>
            <person name="Bouwmeester T."/>
            <person name="Acker-Palmer A."/>
        </authorList>
    </citation>
    <scope>INTERACTION WITH YWHAZ</scope>
    <scope>TISSUE SPECIFICITY</scope>
</reference>
<reference key="10">
    <citation type="journal article" date="2007" name="Nat. Neurosci.">
        <title>Grb4 and GIT1 transduce ephrinB reverse signals modulating spine morphogenesis and synapse formation.</title>
        <authorList>
            <person name="Segura I."/>
            <person name="Essmann C.L."/>
            <person name="Weinges S."/>
            <person name="Acker-Palmer A."/>
        </authorList>
    </citation>
    <scope>INTERACTION WITH EFNB1 AND NCK2</scope>
    <scope>TISSUE SPECIFICITY</scope>
</reference>
<reference key="11">
    <citation type="journal article" date="2007" name="Proc. Natl. Acad. Sci. U.S.A.">
        <title>Large-scale phosphorylation analysis of mouse liver.</title>
        <authorList>
            <person name="Villen J."/>
            <person name="Beausoleil S.A."/>
            <person name="Gerber S.A."/>
            <person name="Gygi S.P."/>
        </authorList>
    </citation>
    <scope>PHOSPHORYLATION [LARGE SCALE ANALYSIS] AT SER-601</scope>
    <scope>IDENTIFICATION BY MASS SPECTROMETRY [LARGE SCALE ANALYSIS]</scope>
    <source>
        <tissue>Liver</tissue>
    </source>
</reference>
<reference key="12">
    <citation type="journal article" date="2008" name="J. Proteome Res.">
        <title>Large-scale identification and evolution indexing of tyrosine phosphorylation sites from murine brain.</title>
        <authorList>
            <person name="Ballif B.A."/>
            <person name="Carey G.R."/>
            <person name="Sunyaev S.R."/>
            <person name="Gygi S.P."/>
        </authorList>
    </citation>
    <scope>PHOSPHORYLATION [LARGE SCALE ANALYSIS] AT TYR-224</scope>
    <scope>IDENTIFICATION BY MASS SPECTROMETRY [LARGE SCALE ANALYSIS]</scope>
    <source>
        <tissue>Brain</tissue>
    </source>
</reference>
<reference key="13">
    <citation type="journal article" date="2009" name="Circulation">
        <title>G-protein-coupled receptor kinase interacting protein-1 is required for pulmonary vascular development.</title>
        <authorList>
            <person name="Pang J."/>
            <person name="Hoefen R."/>
            <person name="Pryhuber G.S."/>
            <person name="Wang J."/>
            <person name="Yin G."/>
            <person name="White R.J."/>
            <person name="Xu X."/>
            <person name="O'Dell M.R."/>
            <person name="Mohan A."/>
            <person name="Michaloski H."/>
            <person name="Massett M.P."/>
            <person name="Yan C."/>
            <person name="Berk B.C."/>
        </authorList>
    </citation>
    <scope>FUNCTION</scope>
    <scope>TISSUE SPECIFICITY</scope>
    <scope>DEVELOPMENTAL STAGE</scope>
    <scope>DISRUPTION PHENOTYPE</scope>
</reference>
<reference key="14">
    <citation type="journal article" date="2009" name="Mol. Cell. Proteomics">
        <title>Large scale localization of protein phosphorylation by use of electron capture dissociation mass spectrometry.</title>
        <authorList>
            <person name="Sweet S.M."/>
            <person name="Bailey C.M."/>
            <person name="Cunningham D.L."/>
            <person name="Heath J.K."/>
            <person name="Cooper H.J."/>
        </authorList>
    </citation>
    <scope>PHOSPHORYLATION [LARGE SCALE ANALYSIS] AT TYR-554</scope>
    <scope>IDENTIFICATION BY MASS SPECTROMETRY [LARGE SCALE ANALYSIS]</scope>
    <source>
        <tissue>Embryonic fibroblast</tissue>
    </source>
</reference>
<reference key="15">
    <citation type="journal article" date="2009" name="Neurosci. Lett.">
        <title>Impaired fear response in mice lacking GIT1.</title>
        <authorList>
            <person name="Schmalzigaug R."/>
            <person name="Rodriguiz R.M."/>
            <person name="Bonner P.E."/>
            <person name="Davidson C.E."/>
            <person name="Wetsel W.C."/>
            <person name="Premont R.T."/>
        </authorList>
    </citation>
    <scope>TISSUE SPECIFICITY</scope>
    <scope>DISRUPTION PHENOTYPE</scope>
</reference>
<reference key="16">
    <citation type="journal article" date="2010" name="Brain Res.">
        <title>Impaired spine formation and learning in GPCR kinase 2 interacting protein-1 (GIT1) knockout mice.</title>
        <authorList>
            <person name="Menon P."/>
            <person name="Deane R."/>
            <person name="Sagare A."/>
            <person name="Lane S.M."/>
            <person name="Zarcone T.J."/>
            <person name="O'Dell M.R."/>
            <person name="Yan C."/>
            <person name="Zlokovic B.V."/>
            <person name="Berk B.C."/>
        </authorList>
    </citation>
    <scope>FUNCTION</scope>
    <scope>DISRUPTION PHENOTYPE</scope>
</reference>
<reference key="17">
    <citation type="journal article" date="2010" name="Cell">
        <title>A tissue-specific atlas of mouse protein phosphorylation and expression.</title>
        <authorList>
            <person name="Huttlin E.L."/>
            <person name="Jedrychowski M.P."/>
            <person name="Elias J.E."/>
            <person name="Goswami T."/>
            <person name="Rad R."/>
            <person name="Beausoleil S.A."/>
            <person name="Villen J."/>
            <person name="Haas W."/>
            <person name="Sowa M.E."/>
            <person name="Gygi S.P."/>
        </authorList>
    </citation>
    <scope>PHOSPHORYLATION [LARGE SCALE ANALYSIS] AT SER-368; SER-371; SER-394; SER-397; THR-401; SER-419; SER-422; SER-426; SER-545; THR-546; SER-570; SER-601; SER-605 AND THR-610</scope>
    <scope>IDENTIFICATION BY MASS SPECTROMETRY [LARGE SCALE ANALYSIS]</scope>
    <source>
        <tissue>Brain</tissue>
        <tissue>Brown adipose tissue</tissue>
        <tissue>Heart</tissue>
        <tissue>Kidney</tissue>
        <tissue>Liver</tissue>
        <tissue>Lung</tissue>
        <tissue>Pancreas</tissue>
        <tissue>Spleen</tissue>
        <tissue>Testis</tissue>
    </source>
</reference>
<reference key="18">
    <citation type="journal article" date="2011" name="Nat. Med.">
        <title>GIT1 is associated with ADHD in humans and ADHD-like behaviors in mice.</title>
        <authorList>
            <person name="Won H."/>
            <person name="Mah W."/>
            <person name="Kim E."/>
            <person name="Kim J.W."/>
            <person name="Hahm E.K."/>
            <person name="Kim M.H."/>
            <person name="Cho S."/>
            <person name="Kim J."/>
            <person name="Jang H."/>
            <person name="Cho S.C."/>
            <person name="Kim B.N."/>
            <person name="Shin M.S."/>
            <person name="Seo J."/>
            <person name="Jeong J."/>
            <person name="Choi S.Y."/>
            <person name="Kim D."/>
            <person name="Kang C."/>
            <person name="Kim E."/>
        </authorList>
    </citation>
    <scope>FUNCTION</scope>
    <scope>TISSUE SPECIFICITY</scope>
    <scope>DISRUPTION PHENOTYPE</scope>
</reference>
<reference key="19">
    <citation type="journal article" date="2013" name="Proc. Natl. Acad. Sci. U.S.A.">
        <title>GluN3A expression restricts spine maturation via inhibition of GIT1/Rac1 signaling.</title>
        <authorList>
            <person name="Fiuza M."/>
            <person name="Gonzalez-Gonzalez I."/>
            <person name="Perez-Otano I."/>
        </authorList>
    </citation>
    <scope>INTERACTION WITH GRIN3A</scope>
    <scope>SUBCELLULAR LOCATION</scope>
    <scope>TISSUE SPECIFICITY</scope>
</reference>
<reference key="20">
    <citation type="journal article" date="2013" name="Oncogene">
        <title>The serologically defined colon cancer antigen-3 interacts with the protein tyrosine phosphatase PTPN13 and is involved in the regulation of cytokinesis.</title>
        <authorList>
            <person name="Hagemann N."/>
            <person name="Ackermann N."/>
            <person name="Christmann J."/>
            <person name="Brier S."/>
            <person name="Yu F."/>
            <person name="Erdmann K.S."/>
        </authorList>
    </citation>
    <scope>INTERACTION WITH ENTR1</scope>
</reference>
<reference key="21">
    <citation type="journal article" date="2014" name="Mol. Cell. Biochem.">
        <title>Decreased BMP2 signal in GIT1 knockout mice slows bone healing.</title>
        <authorList>
            <person name="Sheu T.J."/>
            <person name="Zhou W."/>
            <person name="Fan J."/>
            <person name="Zhou H."/>
            <person name="Zuscik M.J."/>
            <person name="Xie C."/>
            <person name="Yin G."/>
            <person name="Berk B.C."/>
        </authorList>
    </citation>
    <scope>FUNCTION</scope>
    <scope>TISSUE SPECIFICITY</scope>
    <scope>DISRUPTION PHENOTYPE</scope>
</reference>
<reference key="22">
    <citation type="journal article" date="2014" name="PLoS ONE">
        <title>Impaired angiogenesis during fracture healing in GPCR kinase 2 interacting protein-1 (GIT1) knock out mice.</title>
        <authorList>
            <person name="Yin G."/>
            <person name="Sheu T.J."/>
            <person name="Menon P."/>
            <person name="Pang J."/>
            <person name="Ho H.C."/>
            <person name="Shi S."/>
            <person name="Xie C."/>
            <person name="Smolock E."/>
            <person name="Yan C."/>
            <person name="Zuscik M.J."/>
            <person name="Berk B.C."/>
        </authorList>
    </citation>
    <scope>FUNCTION</scope>
    <scope>DEVELOPMENTAL STAGE</scope>
    <scope>DISRUPTION PHENOTYPE</scope>
</reference>
<reference key="23">
    <citation type="journal article" date="2015" name="Exp. Neurobiol.">
        <title>A critical role of GIT1 in vertebrate and invertebrate brain development.</title>
        <authorList>
            <person name="Hong S.T."/>
            <person name="Mah W."/>
        </authorList>
    </citation>
    <scope>FUNCTION</scope>
    <scope>DISRUPTION PHENOTYPE</scope>
</reference>
<reference key="24">
    <citation type="journal article" date="2015" name="Exp. Neurobiol.">
        <title>Aberrant Thalamocortical Synchrony Associated with Behavioral Manifestations in Git1 (-/-) Mice.</title>
        <authorList>
            <person name="Mah W."/>
        </authorList>
    </citation>
    <scope>DISRUPTION PHENOTYPE</scope>
</reference>
<reference key="25">
    <citation type="journal article" date="2018" name="PLoS ONE">
        <title>GIT1 regulates synaptic structural plasticity underlying learning.</title>
        <authorList>
            <person name="Martyn A.C."/>
            <person name="Toth K."/>
            <person name="Schmalzigaug R."/>
            <person name="Hedrick N.G."/>
            <person name="Rodriguiz R.M."/>
            <person name="Yasuda R."/>
            <person name="Wetsel W.C."/>
            <person name="Premont R.T."/>
        </authorList>
    </citation>
    <scope>FUNCTION</scope>
    <scope>DISRUPTION PHENOTYPE</scope>
</reference>
<reference key="26">
    <citation type="journal article" date="2019" name="Cell Prolif.">
        <title>GIT1 regulates angiogenic factor secretion in bone marrow mesenchymal stem cells via NF-kappaB/Notch signalling to promote angiogenesis.</title>
        <authorList>
            <person name="Li L."/>
            <person name="Tang P."/>
            <person name="Zhou Z."/>
            <person name="Wang Q."/>
            <person name="Xu T."/>
            <person name="Zhao S."/>
            <person name="Huang Y."/>
            <person name="Kong F."/>
            <person name="Liu W."/>
            <person name="Cheng L."/>
            <person name="Zhou Z."/>
            <person name="Zhao X."/>
            <person name="Gu C."/>
            <person name="Luo Y."/>
            <person name="Tao G."/>
            <person name="Qian D."/>
            <person name="Chen J."/>
            <person name="Fan J."/>
            <person name="Yin G."/>
        </authorList>
    </citation>
    <scope>FUNCTION</scope>
    <scope>DISRUPTION PHENOTYPE</scope>
</reference>
<reference key="27">
    <citation type="journal article" date="2020" name="J. Bone Miner. Res.">
        <title>Macrophage GIT1 Contributes to Bone Regeneration by Regulating Inflammatory Responses in an ERK/NRF2-Dependent Way.</title>
        <authorList>
            <person name="Zhao S.J."/>
            <person name="Liu H."/>
            <person name="Chen J."/>
            <person name="Qian D.F."/>
            <person name="Kong F.Q."/>
            <person name="Jie J."/>
            <person name="Yin G.Y."/>
            <person name="Li Q.Q."/>
            <person name="Fan J."/>
        </authorList>
    </citation>
    <scope>FUNCTION</scope>
    <scope>TISSUE SPECIFICITY</scope>
</reference>
<reference key="28">
    <citation type="journal article" date="2021" name="Magn. Reson. Imaging">
        <title>Microcephaly with altered cortical layering in GIT1 deficiency revealed by quantitative neuroimaging.</title>
        <authorList>
            <person name="Badea A."/>
            <person name="Schmalzigaug R."/>
            <person name="Kim W."/>
            <person name="Bonner P."/>
            <person name="Ahmed U."/>
            <person name="Johnson G.A."/>
            <person name="Cofer G."/>
            <person name="Foster M."/>
            <person name="Anderson R.J."/>
            <person name="Badea C."/>
            <person name="Premont R.T."/>
        </authorList>
    </citation>
    <scope>FUNCTION</scope>
    <scope>DISRUPTION PHENOTYPE</scope>
</reference>
<protein>
    <recommendedName>
        <fullName>ARF GTPase-activating protein GIT1</fullName>
        <shortName>ARF GAP GIT1</shortName>
    </recommendedName>
    <alternativeName>
        <fullName>G protein-coupled receptor kinase-interactor 1</fullName>
    </alternativeName>
    <alternativeName>
        <fullName>GRK-interacting protein 1</fullName>
    </alternativeName>
</protein>
<gene>
    <name type="primary">Git1</name>
</gene>
<comment type="function">
    <text evidence="1 2 7 12 14 15 18 19 20 22 23 24 25">GTPase-activating protein for ADP ribosylation factor family members, including ARF1. Multidomain scaffold protein that interacts with numerous proteins and therefore participates in many cellular functions, including receptor internalization, focal adhesion remodeling, and signaling by both G protein-coupled receptors and tyrosine kinase receptors (By similarity). Through PAK1 activation, positively regulates microtubule nucleation during interphase. Plays a role in the regulation of cytokinesis; for this function, may act in a pathway also involving ENTR1 and PTPN13 (By similarity). May promote cell motility both by regulating focal complex dynamics and by the activation of RAC1 (By similarity). May act as scaffold for MAPK1/3 signal transduction, recruiting MAPK1/3 to focal adhesions after EGF stimulation via a Src-dependent pathway, hence stimulating cell migration (By similarity). Plays a role in brain development and function (PubMed:25792865, PubMed:33010377). Involved in the regulation of spine density and synaptic plasticity that is required for processes involved in learning (PubMed:20043896, PubMed:29554125). Plays an important role in dendritic spine morphogenesis and synapse formation (PubMed:12695502). In hippocampal neurons, recruits guanine nucleotide exchange factors (GEFs), such as ARHGEF7/beta-PIX, to the synaptic membrane. These in turn locally activate RAC1, which is an essential step for spine morphogenesis and synapse formation (PubMed:12695502). May contribute to the organization of presynaptic active zones through oligomerization and formation of a Piccolo/PCLO-based protein network, which includes ARHGEF7/beta-PIX and FAK1 (By similarity). In neurons, through its interaction with liprin-alpha family members, may be required for AMPA receptor (GRIA2/3) proper targeting to the cell membrane (By similarity). In complex with GABA(A) receptors and ARHGEF7, plays a crucial role in regulating GABA(A) receptor synaptic stability, maintaining GPHN/gephyrin scaffolds and hence GABAergic inhibitory synaptic transmission, by locally coordinating RAC1 and PAK1 downstream effector activity, leading to F-actin stabilization (By similarity). May also be important for RAC1 downstream signaling pathway through PAK3 and regulation of neuronal inhibitory transmission at presynaptic input (PubMed:21499268). Required for successful bone regeneration during fracture healing (PubMed:24586541, PubMed:25138700, PubMed:32460388). The function in intramembranous ossification may, at least partly, exerted by macrophages in which GIT1 is a key negative regulator of redox homeostasis, IL1B production, and glycolysis, acting through the ERK1/2/NRF2/NFE2L2 axis (PubMed:32460388). May play a role in angiogenesis during fracture healing (PubMed:24586541, PubMed:31502302). In this process, may regulate activation of the canonical NF-kappa-B signal in bone mesenchymal stem cells by enhancing the interaction between NEMO and 'Lys-63'-ubiquitinated RIPK1/RIP1, eventually leading to enhanced production of VEGFA and others angiogenic factors (By similarity). Essential for VEGF signaling through the activation of phospholipase C-gamma and ERK1/2, hence may control endothelial cell proliferation and angiogenesis (PubMed:19273721).</text>
</comment>
<comment type="subunit">
    <text evidence="1 2 6 8 9 10 11 16 17">Forms homodimers and possibly oligomers (By similarity). May forms heterooligomers with GIT2 (By similarity). Interacts with G protein-coupled receptor kinases, including GRK2, GRK3, GRK5 and GRK6 (By similarity). Interacts with PPFIA1, PPFIA2 and PPFIA4 (By similarity). Interacts with GRIP1 and forms a ternary complex with PPFIA1 and GRIP1 (By similarity). Directly interacts with ARHGEF7/beta-PIX, forming in vitro a heptameric complex made of a GIT1 dimer and an ARHGEF7 trimer (By similarity). Directly interacts with PXN/paxillin; this interaction is enhanced in the presence of ARHGEF7 (By similarity). Directly interacts (via C-terminus) with TGFB1I1/Hic-5 (via LD motif 3) (PubMed:12153727). Directly interacts with PTK2/FAK1 (By similarity). May interact with PTK2B/PYK2; this interaction may be indirect (By similarity). Interacts with AMPA receptors GRIA2/3 (By similarity). Directly interacts with protein Piccolo/PCLO (By similarity). Forms a complex with Ephrin-B1/EFNB1 and NCK2/GRB4 (via SH2); this interaction is important for spine morphogenesis and synapse formation. Interaction with NCK2 is transient and depends upon GIT1 phosphorylation at Tyr-392 (PubMed:17310244). Interacts with GRIN3A/GluN3A (via C-terminus); this interaction competes with GIT1 interaction with ARHGEF7 and limits synaptic localization of GIT1 (PubMed:24297929). Interacts with IKBKG/NEMO in resting bone mesenchymal stem cells, as well as in TNF-stimulated cells; this interaction may increase IKBKG affinity for 'Lys-63'-linked polyubiquitin chains (By similarity). Interacts with GABA(A) receptors, including GABRB3 and GABRG2 (By similarity). Interacts with SCRIB (PubMed:15182672). Interacts (via N- and C-terminus) with ENTR1/SDCCAG3 (via N-terminus); this interaction is direct (PubMed:23108400). May form a tripartite complex with ENTR1 and PTPN13 (By similarity). Interacts with YWHAZ (PubMed:16959763). Interacts with PAK1 (By similarity). Interacts with PAK3 (By similarity). Directly interacts (via N-terminus) with gamma-tubulin (By similarity). Interacts with MAPK1 and MAPK3; this interaction is required for MAPK1/3 recruitment to focal adhesions (PubMed:15923189).</text>
</comment>
<comment type="interaction">
    <interactant intactId="EBI-645933">
        <id>Q68FF6</id>
    </interactant>
    <interactant intactId="EBI-642580">
        <id>Q9ES28</id>
        <label>Arhgef7</label>
    </interactant>
    <organismsDiffer>false</organismsDiffer>
    <experiments>2</experiments>
</comment>
<comment type="subcellular location">
    <subcellularLocation>
        <location evidence="1">Cytoplasm</location>
    </subcellularLocation>
    <subcellularLocation>
        <location evidence="2">Presynapse</location>
    </subcellularLocation>
    <subcellularLocation>
        <location evidence="17">Postsynapse</location>
    </subcellularLocation>
    <subcellularLocation>
        <location evidence="2">Postsynaptic density</location>
    </subcellularLocation>
    <subcellularLocation>
        <location evidence="9">Cell junction</location>
        <location evidence="9">Focal adhesion</location>
    </subcellularLocation>
    <subcellularLocation>
        <location evidence="1">Cell projection</location>
        <location evidence="1">Lamellipodium</location>
    </subcellularLocation>
    <subcellularLocation>
        <location evidence="1">Cytoplasm</location>
        <location evidence="1">Cytoskeleton</location>
        <location evidence="1">Microtubule organizing center</location>
        <location evidence="1">Centrosome</location>
    </subcellularLocation>
    <subcellularLocation>
        <location evidence="1">Cytoplasm</location>
        <location evidence="1">Cytoskeleton</location>
        <location evidence="1">Spindle pole</location>
    </subcellularLocation>
    <text evidence="1 2">Cycles between at least 3 distinct intracellular compartments, including focal adhesions, cytosolic complexes, containing at least PXN/paxillin, ARHGEF7 and PAK1, and membrane protrusions. During cell migration, moves from the disassembling adhesions into the cytosol and towards the leading edge. In adherent cells, localizes to adhesions. Recruitment to adhesions may be mediated by RAC1 and active tyrosine-phosphorylated PXN (By similarity). May be present in both excitatory and inhibitory synapses. In hippocampal neurons, recruitment of GIT1 to synapses is regulated by ephrinB activation and ephrinB downstream effector GRB4/NCK2. In hippocampal neurons, partially colocalizes with PCLO (By similarity). Interaction with GRIN3A limits GIT1 synaptic localization (By similarity). Localization to the centrosome does not depend upon the presence of gamma-tubulin (By similarity).</text>
</comment>
<comment type="tissue specificity">
    <text evidence="8 10 11 12 13 15 17 19 24">Expressed in the brain (at protein level) (PubMed:15182672, PubMed:16959763, PubMed:17310244, PubMed:19273721, PubMed:19383529, PubMed:21499268, PubMed:24297929). Also expressed at high levels in lung and heart (PubMed:19273721). In lung, expressed in endothelial cells, especially in capillaries; also expressed in smooth muscle and epithelial cells of bronchi (at protein level) (PubMed:19273721). Expressed in bone marrow mesenchymal stem cells, as well as in osteoclasts and bone marrow-derived macrophages (at protein level) (PubMed:25138700, PubMed:32460388).</text>
</comment>
<comment type="developmental stage">
    <text evidence="12 18">In lung, up-regulated from postnatal day 3 (P3). Expression levels decrease after P5 and at P25, they are similar to those observed at P0 (PubMed:19273721). During the fracture healing process, expression is strongly up-regulated in the healing callus 14 days after the lesion and remains highly expressed at day 21 (PubMed:24586541).</text>
</comment>
<comment type="PTM">
    <text evidence="2">Phosphorylated on tyrosine residues by PTK2/FAK1 and SRC in growing fibroblasts. Phosphorylation at Tyr-392 is induced by activation of Ephrin-B1/EFNB1 and catalyzed by SRC family kinases. It is required for the interaction with NCK2 and for GIT1 recruitment to synapses in hippocampal neurons.</text>
</comment>
<comment type="disruption phenotype">
    <text evidence="12 13 14 15 18 19 20 21 22 23 25">Knockout mice are born at the expected Mendelian ratio, but have decreased survival compared to wild-type littermates, with about 50% of mutant mice dying postnatally. Surviving animals develop normally and are fertile (PubMed:19273721, PubMed:19383529, PubMed:21499268, PubMed:33010377). They are however 60-70% smaller than wild-type littermates (PubMed:21499268). A major abnormality in knockout mice is impaired lung development, characterized by markedly reduced numbers of pulmonary blood vessels and increased alveolar spaces (PubMed:19273721). Although knockout mice show an unaltered brain gross morphology and neuronal density, they display microcephaly, with an overall brain size about 32% smaller compared to wild-type controls. This phenotype may be due to smaller neuronal size, rather than reduced neuron number, compared to wild-type littermates (PubMed:20043896, PubMed:25792865, PubMed:33010377). Mutant mice exhibit reduced dendritic length and spine density in the hippocampus and the cortex, which may lead to poor adaptation to new environments and impaired fear response (PubMed:19383529, PubMed:20043896, PubMed:25792865, PubMed:29554125). This effect on the brain is not uniform. Multiple brain regions suffer local atrophy, including extensive areas of the cortex, thalamus, and hippocampus, white matter tracts have a reduced volume, most notably in the anterior commissure, but also in the cerebral peduncle, fornix, and spinal trigeminal tract. On the other hand, local hypertrophy is detected in the basal ganglia, the accumbens, caudate putamen, and amygdala, as well as in the cortical layer IV, and cerebellum (PubMed:33010377). The analysis of a genetrap mouse strain lacking GIT1 showed phenotypic traits similar to attention deficit-hyperactivity disorder (ADHD), including hyperactivity, impaired learning and memory, and enhanced theta rhythms. These phenotypic traits could be reversed by amphetamines and methylphenidate (PubMed:21499268, PubMed:26113791). Abnormal thalamic oscillations, cortical theta rhythms and behavioral hyperactivity were also normalized by ethosuximide (PubMed:26113791). The abnormal behaviors decreased with age (PubMed:21499268). ADHD phenotype and response to amphetamines were not seen in other knockout mouse models (PubMed:29554125). Mutant animals show altered gait (PubMed:25792865). They exhibit defects in motor coordination and motor learning in rotarod test and abnormal spatial learning and memory (PubMed:25792865, PubMed:29554125). Knockout mice exhibit delayed bone fracture healing process. They display a persistence of cartilagenous callus and decreased chondrocyte proliferation and apoptosis, leading to their accumulation in the fracture area (PubMed:24586541, PubMed:25138700). The healing callus exhibits reduced blood vessel volume and number, as well as a reduced osteoclast number (PubMed:24586541, PubMed:31502302).</text>
</comment>
<sequence length="770" mass="85300">MSRKGPRAEVCADCSAPDPGWASISRGVLVCDECCSVHRSLGRHISIVKHLRHSAWPPTLLQMVHTLASNGANSIWEHSLLDPAQVQSGRRKANPQDKVHPIKSEFIRAKYQMLAFVHKLPCRDDDGVTAKDLSKQLHSSVRTGNLETCLRLLSLGAQANFFHPEKGTTPLHVAAKAGQTLQAELLVVYGADPGSPDVNGRTPIDYARQAGHHELAERLVECQYELTDRLAFYLCGRKPDHKNGHYIIPQMADRSRQKCMSQSLDLSELAKAAKKKLQALSNRLFEELAMDVYDEVDRRENDAVWLATQNHSTLVTERSAVPFLPVNPEYSATRNQGRQKLARFNAREFATLIIDILSEAKRRQQGKSLSSPTDNLELSARSQSELDDQHDYDSVASDEDTDQEPLPSAGATRNNRARSMDSSDLSDGAVTLQEYLELKKALATSEAKVQQLMKVNSSLSDELRRLQREIHKLQAENLQLRQPPGPVPPPSLPSERAEHTLMGPGGSTHRRDRQAFSMYEPGSALKPFGGTPGDELATRLQPFHSTELEDDAIYSVHVPAGLYRIRKGVSASSVPFTPSSPLLSCSQEGSRHASKLSRHGSGADSDYENTQSGDPLLGLEGKRFLELSKEDELHPELESLDGDLDPGLPSTEDVILKTEQVTKNIQELLRAAQEFKHDSFVPCSEKIHLAVTEMASLFPKRPALEPVRSSLRLLNASAYRLQSECRKTVPPEPGAPVDFQLLTQQVIQCAYDIAKAAKQLVTITTREKKQ</sequence>
<proteinExistence type="evidence at protein level"/>
<name>GIT1_MOUSE</name>